<protein>
    <recommendedName>
        <fullName>Serpentine receptor class alpha-32</fullName>
        <shortName>Protein sra-32</shortName>
    </recommendedName>
</protein>
<keyword id="KW-0472">Membrane</keyword>
<keyword id="KW-1185">Reference proteome</keyword>
<keyword id="KW-0812">Transmembrane</keyword>
<keyword id="KW-1133">Transmembrane helix</keyword>
<evidence type="ECO:0000255" key="1"/>
<evidence type="ECO:0000305" key="2"/>
<accession>Q10934</accession>
<organism>
    <name type="scientific">Caenorhabditis elegans</name>
    <dbReference type="NCBI Taxonomy" id="6239"/>
    <lineage>
        <taxon>Eukaryota</taxon>
        <taxon>Metazoa</taxon>
        <taxon>Ecdysozoa</taxon>
        <taxon>Nematoda</taxon>
        <taxon>Chromadorea</taxon>
        <taxon>Rhabditida</taxon>
        <taxon>Rhabditina</taxon>
        <taxon>Rhabditomorpha</taxon>
        <taxon>Rhabditoidea</taxon>
        <taxon>Rhabditidae</taxon>
        <taxon>Peloderinae</taxon>
        <taxon>Caenorhabditis</taxon>
    </lineage>
</organism>
<name>SRA32_CAEEL</name>
<gene>
    <name type="primary">sra-32</name>
    <name type="ORF">B0304.5</name>
</gene>
<proteinExistence type="inferred from homology"/>
<reference key="1">
    <citation type="journal article" date="1998" name="Science">
        <title>Genome sequence of the nematode C. elegans: a platform for investigating biology.</title>
        <authorList>
            <consortium name="The C. elegans sequencing consortium"/>
        </authorList>
    </citation>
    <scope>NUCLEOTIDE SEQUENCE [LARGE SCALE GENOMIC DNA]</scope>
    <source>
        <strain>Bristol N2</strain>
    </source>
</reference>
<sequence length="338" mass="38952">MEDYAENSFNVIPISMEYIRDLRTATSFRVYVIYIDLVLILALFLSIHAIRELTSKQLFSKSITHLLIASLVYGNVHNASYTIIETWSLYRSFAYSDNMTAIMFTSEECFVQHVLNSCVRFLFIAIELALNVDRIIVILFRKHFHCYPGVRGEILNILAVILSFALGCLLHLKGPHPGIVTTSCFRETDITINLCSTNLTSYTILSACCAALDFLMMWYTWNDRKKINYDLNSQYLKVEQHHSLMAVSLNSLLQLFVTSIYAISMFVLANMSMTNPELGNANLLRWFYTTPYSTLLVPIQIKVFIQWIGNRRKRRINTATRVSLTQDGYFTKLSDSWK</sequence>
<dbReference type="EMBL" id="FO080166">
    <property type="protein sequence ID" value="CCD61737.1"/>
    <property type="molecule type" value="Genomic_DNA"/>
</dbReference>
<dbReference type="PIR" id="T15322">
    <property type="entry name" value="T15322"/>
</dbReference>
<dbReference type="RefSeq" id="NP_494801.2">
    <property type="nucleotide sequence ID" value="NM_062400.2"/>
</dbReference>
<dbReference type="SMR" id="Q10934"/>
<dbReference type="STRING" id="6239.B0304.5.1"/>
<dbReference type="PaxDb" id="6239-B0304.5"/>
<dbReference type="EnsemblMetazoa" id="B0304.5.1">
    <property type="protein sequence ID" value="B0304.5.1"/>
    <property type="gene ID" value="WBGene00005058"/>
</dbReference>
<dbReference type="EnsemblMetazoa" id="B0304.5.2">
    <property type="protein sequence ID" value="B0304.5.2"/>
    <property type="gene ID" value="WBGene00005058"/>
</dbReference>
<dbReference type="GeneID" id="181919"/>
<dbReference type="KEGG" id="cel:CELE_B0304.5"/>
<dbReference type="UCSC" id="B0304.5">
    <property type="organism name" value="c. elegans"/>
</dbReference>
<dbReference type="AGR" id="WB:WBGene00005058"/>
<dbReference type="CTD" id="181919"/>
<dbReference type="WormBase" id="B0304.5">
    <property type="protein sequence ID" value="CE33508"/>
    <property type="gene ID" value="WBGene00005058"/>
    <property type="gene designation" value="sra-32"/>
</dbReference>
<dbReference type="eggNOG" id="ENOG502TFF8">
    <property type="taxonomic scope" value="Eukaryota"/>
</dbReference>
<dbReference type="GeneTree" id="ENSGT00970000195848"/>
<dbReference type="HOGENOM" id="CLU_048025_1_0_1"/>
<dbReference type="InParanoid" id="Q10934"/>
<dbReference type="OMA" id="TIIETWS"/>
<dbReference type="OrthoDB" id="5789498at2759"/>
<dbReference type="PhylomeDB" id="Q10934"/>
<dbReference type="PRO" id="PR:Q10934"/>
<dbReference type="Proteomes" id="UP000001940">
    <property type="component" value="Chromosome II"/>
</dbReference>
<dbReference type="GO" id="GO:0016020">
    <property type="term" value="C:membrane"/>
    <property type="evidence" value="ECO:0007669"/>
    <property type="project" value="UniProtKB-SubCell"/>
</dbReference>
<dbReference type="GO" id="GO:0004930">
    <property type="term" value="F:G protein-coupled receptor activity"/>
    <property type="evidence" value="ECO:0007669"/>
    <property type="project" value="InterPro"/>
</dbReference>
<dbReference type="GO" id="GO:0004984">
    <property type="term" value="F:olfactory receptor activity"/>
    <property type="evidence" value="ECO:0000318"/>
    <property type="project" value="GO_Central"/>
</dbReference>
<dbReference type="GO" id="GO:0050907">
    <property type="term" value="P:detection of chemical stimulus involved in sensory perception"/>
    <property type="evidence" value="ECO:0000318"/>
    <property type="project" value="GO_Central"/>
</dbReference>
<dbReference type="InterPro" id="IPR000344">
    <property type="entry name" value="7TM_GPCR_serpentine_rcpt_Sra"/>
</dbReference>
<dbReference type="InterPro" id="IPR051080">
    <property type="entry name" value="Nematode_rcpt-like_serp_alpha"/>
</dbReference>
<dbReference type="PANTHER" id="PTHR31357">
    <property type="entry name" value="SERPENTINE RECEPTOR CLASS ALPHA-10"/>
    <property type="match status" value="1"/>
</dbReference>
<dbReference type="PANTHER" id="PTHR31357:SF2">
    <property type="entry name" value="SERPENTINE RECEPTOR CLASS ALPHA-32"/>
    <property type="match status" value="1"/>
</dbReference>
<dbReference type="Pfam" id="PF02117">
    <property type="entry name" value="7TM_GPCR_Sra"/>
    <property type="match status" value="1"/>
</dbReference>
<comment type="subcellular location">
    <subcellularLocation>
        <location evidence="2">Membrane</location>
        <topology evidence="2">Multi-pass membrane protein</topology>
    </subcellularLocation>
</comment>
<comment type="similarity">
    <text evidence="2">Belongs to the nematode receptor-like protein sra family.</text>
</comment>
<feature type="chain" id="PRO_0000104492" description="Serpentine receptor class alpha-32">
    <location>
        <begin position="1"/>
        <end position="338"/>
    </location>
</feature>
<feature type="transmembrane region" description="Helical" evidence="1">
    <location>
        <begin position="30"/>
        <end position="50"/>
    </location>
</feature>
<feature type="transmembrane region" description="Helical" evidence="1">
    <location>
        <begin position="63"/>
        <end position="83"/>
    </location>
</feature>
<feature type="transmembrane region" description="Helical" evidence="1">
    <location>
        <begin position="120"/>
        <end position="140"/>
    </location>
</feature>
<feature type="transmembrane region" description="Helical" evidence="1">
    <location>
        <begin position="152"/>
        <end position="172"/>
    </location>
</feature>
<feature type="transmembrane region" description="Helical" evidence="1">
    <location>
        <begin position="199"/>
        <end position="219"/>
    </location>
</feature>
<feature type="transmembrane region" description="Helical" evidence="1">
    <location>
        <begin position="249"/>
        <end position="269"/>
    </location>
</feature>
<feature type="transmembrane region" description="Helical" evidence="1">
    <location>
        <begin position="289"/>
        <end position="309"/>
    </location>
</feature>